<name>CCSA_SPIOL</name>
<dbReference type="EMBL" id="AJ400848">
    <property type="protein sequence ID" value="CAB88783.1"/>
    <property type="molecule type" value="Genomic_DNA"/>
</dbReference>
<dbReference type="RefSeq" id="NP_054987.1">
    <property type="nucleotide sequence ID" value="NC_002202.1"/>
</dbReference>
<dbReference type="SMR" id="Q9M3J1"/>
<dbReference type="FunCoup" id="Q9M3J1">
    <property type="interactions" value="13"/>
</dbReference>
<dbReference type="STRING" id="3562.Q9M3J1"/>
<dbReference type="GeneID" id="2715692"/>
<dbReference type="KEGG" id="soe:2715692"/>
<dbReference type="InParanoid" id="Q9M3J1"/>
<dbReference type="OrthoDB" id="1640at2759"/>
<dbReference type="Proteomes" id="UP001155700">
    <property type="component" value="Chloroplast Pltd"/>
</dbReference>
<dbReference type="GO" id="GO:0009535">
    <property type="term" value="C:chloroplast thylakoid membrane"/>
    <property type="evidence" value="ECO:0007669"/>
    <property type="project" value="UniProtKB-SubCell"/>
</dbReference>
<dbReference type="GO" id="GO:0005886">
    <property type="term" value="C:plasma membrane"/>
    <property type="evidence" value="ECO:0007669"/>
    <property type="project" value="TreeGrafter"/>
</dbReference>
<dbReference type="GO" id="GO:0020037">
    <property type="term" value="F:heme binding"/>
    <property type="evidence" value="ECO:0007669"/>
    <property type="project" value="InterPro"/>
</dbReference>
<dbReference type="GO" id="GO:0017004">
    <property type="term" value="P:cytochrome complex assembly"/>
    <property type="evidence" value="ECO:0007669"/>
    <property type="project" value="UniProtKB-UniRule"/>
</dbReference>
<dbReference type="HAMAP" id="MF_01391">
    <property type="entry name" value="CytC_CcsA"/>
    <property type="match status" value="1"/>
</dbReference>
<dbReference type="InterPro" id="IPR002541">
    <property type="entry name" value="Cyt_c_assembly"/>
</dbReference>
<dbReference type="InterPro" id="IPR017562">
    <property type="entry name" value="Cyt_c_biogenesis_CcsA"/>
</dbReference>
<dbReference type="InterPro" id="IPR045062">
    <property type="entry name" value="Cyt_c_biogenesis_CcsA/CcmC"/>
</dbReference>
<dbReference type="NCBIfam" id="TIGR03144">
    <property type="entry name" value="cytochr_II_ccsB"/>
    <property type="match status" value="1"/>
</dbReference>
<dbReference type="PANTHER" id="PTHR30071:SF1">
    <property type="entry name" value="CYTOCHROME B_B6 PROTEIN-RELATED"/>
    <property type="match status" value="1"/>
</dbReference>
<dbReference type="PANTHER" id="PTHR30071">
    <property type="entry name" value="HEME EXPORTER PROTEIN C"/>
    <property type="match status" value="1"/>
</dbReference>
<dbReference type="Pfam" id="PF01578">
    <property type="entry name" value="Cytochrom_C_asm"/>
    <property type="match status" value="1"/>
</dbReference>
<organism>
    <name type="scientific">Spinacia oleracea</name>
    <name type="common">Spinach</name>
    <dbReference type="NCBI Taxonomy" id="3562"/>
    <lineage>
        <taxon>Eukaryota</taxon>
        <taxon>Viridiplantae</taxon>
        <taxon>Streptophyta</taxon>
        <taxon>Embryophyta</taxon>
        <taxon>Tracheophyta</taxon>
        <taxon>Spermatophyta</taxon>
        <taxon>Magnoliopsida</taxon>
        <taxon>eudicotyledons</taxon>
        <taxon>Gunneridae</taxon>
        <taxon>Pentapetalae</taxon>
        <taxon>Caryophyllales</taxon>
        <taxon>Chenopodiaceae</taxon>
        <taxon>Chenopodioideae</taxon>
        <taxon>Anserineae</taxon>
        <taxon>Spinacia</taxon>
    </lineage>
</organism>
<geneLocation type="chloroplast"/>
<comment type="function">
    <text evidence="1">Required during biogenesis of c-type cytochromes (cytochrome c6 and cytochrome f) at the step of heme attachment.</text>
</comment>
<comment type="subunit">
    <text evidence="1">May interact with Ccs1.</text>
</comment>
<comment type="subcellular location">
    <subcellularLocation>
        <location evidence="1">Plastid</location>
        <location evidence="1">Chloroplast thylakoid membrane</location>
        <topology evidence="1">Multi-pass membrane protein</topology>
    </subcellularLocation>
</comment>
<comment type="similarity">
    <text evidence="1">Belongs to the CcmF/CycK/Ccl1/NrfE/CcsA family.</text>
</comment>
<accession>Q9M3J1</accession>
<proteinExistence type="inferred from homology"/>
<sequence length="323" mass="36994">MIFSTLEHILTHISFSTVSVVITLHLITLLVNEIVGLYNSLEKGMLVTFFCITGLLVTRWVYWKHFPLSDLYESLIFLSWSFYLIHMIPSFLKKEKNSLNVITAPSAIFTQGFATSGLLTEMHQSGILVPALQSQWLMMHVSMMVLGYAALLGGSLLSVTLLIIIFQKDLIQVFDKRKHLLNESFFFGEIQYINEKSNIVQNASPSYVRNYYRSQLIEQLDHWSYRVISLGFIFLTIGILSGAVWANEAWGSYWNWDPKETWAFITWTIFAIYLHIRTNKNLRGANSAIVAFIGFLIIWICYFGVNLLGIGLHSYGSFTLTLN</sequence>
<evidence type="ECO:0000255" key="1">
    <source>
        <dbReference type="HAMAP-Rule" id="MF_01391"/>
    </source>
</evidence>
<gene>
    <name evidence="1" type="primary">ccsA</name>
</gene>
<feature type="chain" id="PRO_0000201617" description="Cytochrome c biogenesis protein CcsA">
    <location>
        <begin position="1"/>
        <end position="323"/>
    </location>
</feature>
<feature type="transmembrane region" description="Helical" evidence="1">
    <location>
        <begin position="18"/>
        <end position="38"/>
    </location>
</feature>
<feature type="transmembrane region" description="Helical" evidence="1">
    <location>
        <begin position="43"/>
        <end position="63"/>
    </location>
</feature>
<feature type="transmembrane region" description="Helical" evidence="1">
    <location>
        <begin position="71"/>
        <end position="91"/>
    </location>
</feature>
<feature type="transmembrane region" description="Helical" evidence="1">
    <location>
        <begin position="99"/>
        <end position="119"/>
    </location>
</feature>
<feature type="transmembrane region" description="Helical" evidence="1">
    <location>
        <begin position="146"/>
        <end position="166"/>
    </location>
</feature>
<feature type="transmembrane region" description="Helical" evidence="1">
    <location>
        <begin position="227"/>
        <end position="247"/>
    </location>
</feature>
<feature type="transmembrane region" description="Helical" evidence="1">
    <location>
        <begin position="256"/>
        <end position="276"/>
    </location>
</feature>
<feature type="transmembrane region" description="Helical" evidence="1">
    <location>
        <begin position="288"/>
        <end position="308"/>
    </location>
</feature>
<protein>
    <recommendedName>
        <fullName evidence="1">Cytochrome c biogenesis protein CcsA</fullName>
    </recommendedName>
</protein>
<keyword id="KW-0150">Chloroplast</keyword>
<keyword id="KW-0201">Cytochrome c-type biogenesis</keyword>
<keyword id="KW-0472">Membrane</keyword>
<keyword id="KW-0934">Plastid</keyword>
<keyword id="KW-1185">Reference proteome</keyword>
<keyword id="KW-0793">Thylakoid</keyword>
<keyword id="KW-0812">Transmembrane</keyword>
<keyword id="KW-1133">Transmembrane helix</keyword>
<reference key="1">
    <citation type="journal article" date="2001" name="Plant Mol. Biol.">
        <title>The plastid chromosome of spinach (Spinacia oleracea): complete nucleotide sequence and gene organization.</title>
        <authorList>
            <person name="Schmitz-Linneweber C."/>
            <person name="Maier R.M."/>
            <person name="Alcaraz J.-P."/>
            <person name="Cottet A."/>
            <person name="Herrmann R.G."/>
            <person name="Mache R."/>
        </authorList>
    </citation>
    <scope>NUCLEOTIDE SEQUENCE [LARGE SCALE GENOMIC DNA]</scope>
    <source>
        <strain>cv. Geant d'hiver</strain>
        <strain>cv. Monatol</strain>
    </source>
</reference>